<accession>P32711</accession>
<accession>Q2M6M9</accession>
<gene>
    <name type="primary">nrfF</name>
    <name type="synonym">yjcM</name>
    <name type="ordered locus">b4075</name>
    <name type="ordered locus">JW4036</name>
</gene>
<reference key="1">
    <citation type="journal article" date="1994" name="Mol. Microbiol.">
        <title>A seven-gene operon essential for formate-dependent nitrite reduction to ammonia by enteric bacteria.</title>
        <authorList>
            <person name="Hussain H.A."/>
            <person name="Grove J."/>
            <person name="Griffiths L."/>
            <person name="Busby S."/>
            <person name="Cole J."/>
        </authorList>
    </citation>
    <scope>NUCLEOTIDE SEQUENCE [GENOMIC DNA]</scope>
</reference>
<reference key="2">
    <citation type="journal article" date="1993" name="Nucleic Acids Res.">
        <title>Analysis of the Escherichia coli genome. IV. DNA sequence of the region from 89.2 to 92.8 minutes.</title>
        <authorList>
            <person name="Blattner F.R."/>
            <person name="Burland V.D."/>
            <person name="Plunkett G. III"/>
            <person name="Sofia H.J."/>
            <person name="Daniels D.L."/>
        </authorList>
    </citation>
    <scope>NUCLEOTIDE SEQUENCE [LARGE SCALE GENOMIC DNA]</scope>
    <source>
        <strain>K12 / MG1655 / ATCC 47076</strain>
    </source>
</reference>
<reference key="3">
    <citation type="journal article" date="1997" name="Science">
        <title>The complete genome sequence of Escherichia coli K-12.</title>
        <authorList>
            <person name="Blattner F.R."/>
            <person name="Plunkett G. III"/>
            <person name="Bloch C.A."/>
            <person name="Perna N.T."/>
            <person name="Burland V."/>
            <person name="Riley M."/>
            <person name="Collado-Vides J."/>
            <person name="Glasner J.D."/>
            <person name="Rode C.K."/>
            <person name="Mayhew G.F."/>
            <person name="Gregor J."/>
            <person name="Davis N.W."/>
            <person name="Kirkpatrick H.A."/>
            <person name="Goeden M.A."/>
            <person name="Rose D.J."/>
            <person name="Mau B."/>
            <person name="Shao Y."/>
        </authorList>
    </citation>
    <scope>NUCLEOTIDE SEQUENCE [LARGE SCALE GENOMIC DNA]</scope>
    <source>
        <strain>K12 / MG1655 / ATCC 47076</strain>
    </source>
</reference>
<reference key="4">
    <citation type="journal article" date="2006" name="Mol. Syst. Biol.">
        <title>Highly accurate genome sequences of Escherichia coli K-12 strains MG1655 and W3110.</title>
        <authorList>
            <person name="Hayashi K."/>
            <person name="Morooka N."/>
            <person name="Yamamoto Y."/>
            <person name="Fujita K."/>
            <person name="Isono K."/>
            <person name="Choi S."/>
            <person name="Ohtsubo E."/>
            <person name="Baba T."/>
            <person name="Wanner B.L."/>
            <person name="Mori H."/>
            <person name="Horiuchi T."/>
        </authorList>
    </citation>
    <scope>NUCLEOTIDE SEQUENCE [LARGE SCALE GENOMIC DNA]</scope>
    <source>
        <strain>K12 / W3110 / ATCC 27325 / DSM 5911</strain>
    </source>
</reference>
<reference key="5">
    <citation type="journal article" date="1996" name="Mol. Gen. Genet.">
        <title>The role of the genes nrf EFG and ccmFH in cytochrome c biosynthesis in Escherichia coli.</title>
        <authorList>
            <person name="Grovc J."/>
            <person name="Busby S."/>
            <person name="Cole J."/>
        </authorList>
    </citation>
    <scope>POSSIBLE FUNCTION</scope>
    <source>
        <strain>K12</strain>
    </source>
</reference>
<reference key="6">
    <citation type="journal article" date="1998" name="Mol. Microbiol.">
        <title>Involvement of products of the nrfEFG genes in the covalent attachment of haem c to a novel cysteine-lysine motif in the cytochrome c552 nitrite reductase from Escherichia coli.</title>
        <authorList>
            <person name="Eaves D.J."/>
            <person name="Grove J."/>
            <person name="Staudenmann W."/>
            <person name="James P."/>
            <person name="Poole R.K."/>
            <person name="White S.A."/>
            <person name="Griffiths I."/>
            <person name="Cole J.A."/>
        </authorList>
    </citation>
    <scope>FUNCTION</scope>
    <scope>DISRUPTION PHENOTYPE</scope>
    <source>
        <strain>K12 / JCB7120</strain>
    </source>
</reference>
<organism>
    <name type="scientific">Escherichia coli (strain K12)</name>
    <dbReference type="NCBI Taxonomy" id="83333"/>
    <lineage>
        <taxon>Bacteria</taxon>
        <taxon>Pseudomonadati</taxon>
        <taxon>Pseudomonadota</taxon>
        <taxon>Gammaproteobacteria</taxon>
        <taxon>Enterobacterales</taxon>
        <taxon>Enterobacteriaceae</taxon>
        <taxon>Escherichia</taxon>
    </lineage>
</organism>
<feature type="signal peptide" evidence="1">
    <location>
        <begin position="1"/>
        <end position="27"/>
    </location>
</feature>
<feature type="chain" id="PRO_0000006614" description="Formate-dependent nitrite reductase complex subunit NrfF">
    <location>
        <begin position="28"/>
        <end position="127"/>
    </location>
</feature>
<feature type="binding site" description="covalent" evidence="1">
    <location>
        <position position="44"/>
    </location>
    <ligand>
        <name>heme</name>
        <dbReference type="ChEBI" id="CHEBI:30413"/>
    </ligand>
</feature>
<feature type="binding site" description="covalent" evidence="1">
    <location>
        <position position="47"/>
    </location>
    <ligand>
        <name>heme</name>
        <dbReference type="ChEBI" id="CHEBI:30413"/>
    </ligand>
</feature>
<comment type="function">
    <text evidence="4">Not required for the biosynthesis of any of the c-type cytochromes. Possible subunit of a heme lyase.</text>
</comment>
<comment type="subcellular location">
    <subcellularLocation>
        <location evidence="3">Periplasm</location>
    </subcellularLocation>
</comment>
<comment type="disruption phenotype">
    <text evidence="2">Triple nrfE-nrfF-nrfG deletion mutants no longer attach heme 1 (covalently attached to 'Cys-122', the CWSCK motif) of cytochrome c552 (AC P0ABK9).</text>
</comment>
<comment type="similarity">
    <text evidence="3">Belongs to the CcmH/CycL/Ccl2/NrfF family.</text>
</comment>
<evidence type="ECO:0000255" key="1"/>
<evidence type="ECO:0000269" key="2">
    <source>
    </source>
</evidence>
<evidence type="ECO:0000305" key="3"/>
<evidence type="ECO:0000305" key="4">
    <source>
    </source>
</evidence>
<sequence length="127" mass="14523">MNKGLLTLLLLFTCFAHAQVVDTWQFANPQQQQQALNIASQLRCPQCQNQNLLESNAPVAVSMRHQVYSMVAEGKNEVEIIGWMTERYGDFVRYNPPLTGQTLVLWALPVVLLLLMALILWRVRAKR</sequence>
<keyword id="KW-0349">Heme</keyword>
<keyword id="KW-0408">Iron</keyword>
<keyword id="KW-0479">Metal-binding</keyword>
<keyword id="KW-0574">Periplasm</keyword>
<keyword id="KW-1185">Reference proteome</keyword>
<keyword id="KW-0732">Signal</keyword>
<name>NRFF_ECOLI</name>
<proteinExistence type="inferred from homology"/>
<protein>
    <recommendedName>
        <fullName>Formate-dependent nitrite reductase complex subunit NrfF</fullName>
    </recommendedName>
</protein>
<dbReference type="EMBL" id="X72298">
    <property type="protein sequence ID" value="CAA51046.1"/>
    <property type="molecule type" value="Genomic_DNA"/>
</dbReference>
<dbReference type="EMBL" id="U00006">
    <property type="protein sequence ID" value="AAC43169.1"/>
    <property type="molecule type" value="Genomic_DNA"/>
</dbReference>
<dbReference type="EMBL" id="U00096">
    <property type="protein sequence ID" value="AAD13458.1"/>
    <property type="molecule type" value="Genomic_DNA"/>
</dbReference>
<dbReference type="EMBL" id="AP009048">
    <property type="protein sequence ID" value="BAE78077.1"/>
    <property type="molecule type" value="Genomic_DNA"/>
</dbReference>
<dbReference type="PIR" id="F57987">
    <property type="entry name" value="F57987"/>
</dbReference>
<dbReference type="RefSeq" id="NP_418499.1">
    <property type="nucleotide sequence ID" value="NC_000913.3"/>
</dbReference>
<dbReference type="RefSeq" id="WP_001032531.1">
    <property type="nucleotide sequence ID" value="NZ_SSZK01000016.1"/>
</dbReference>
<dbReference type="SMR" id="P32711"/>
<dbReference type="BioGRID" id="4262678">
    <property type="interactions" value="9"/>
</dbReference>
<dbReference type="FunCoup" id="P32711">
    <property type="interactions" value="262"/>
</dbReference>
<dbReference type="STRING" id="511145.b4075"/>
<dbReference type="PaxDb" id="511145-b4075"/>
<dbReference type="EnsemblBacteria" id="AAD13458">
    <property type="protein sequence ID" value="AAD13458"/>
    <property type="gene ID" value="b4075"/>
</dbReference>
<dbReference type="GeneID" id="948578"/>
<dbReference type="KEGG" id="ecj:JW4036"/>
<dbReference type="KEGG" id="eco:b4075"/>
<dbReference type="KEGG" id="ecoc:C3026_22025"/>
<dbReference type="PATRIC" id="fig|1411691.4.peg.2629"/>
<dbReference type="EchoBASE" id="EB1892"/>
<dbReference type="eggNOG" id="COG3088">
    <property type="taxonomic scope" value="Bacteria"/>
</dbReference>
<dbReference type="HOGENOM" id="CLU_107187_0_2_6"/>
<dbReference type="InParanoid" id="P32711"/>
<dbReference type="OMA" id="CSGESIY"/>
<dbReference type="OrthoDB" id="9804975at2"/>
<dbReference type="PhylomeDB" id="P32711"/>
<dbReference type="BioCyc" id="EcoCyc:EG11949-MONOMER"/>
<dbReference type="PRO" id="PR:P32711"/>
<dbReference type="Proteomes" id="UP000000625">
    <property type="component" value="Chromosome"/>
</dbReference>
<dbReference type="GO" id="GO:0042597">
    <property type="term" value="C:periplasmic space"/>
    <property type="evidence" value="ECO:0007669"/>
    <property type="project" value="UniProtKB-SubCell"/>
</dbReference>
<dbReference type="GO" id="GO:0005886">
    <property type="term" value="C:plasma membrane"/>
    <property type="evidence" value="ECO:0000318"/>
    <property type="project" value="GO_Central"/>
</dbReference>
<dbReference type="GO" id="GO:0046872">
    <property type="term" value="F:metal ion binding"/>
    <property type="evidence" value="ECO:0007669"/>
    <property type="project" value="UniProtKB-KW"/>
</dbReference>
<dbReference type="CDD" id="cd16378">
    <property type="entry name" value="CcmH_N"/>
    <property type="match status" value="1"/>
</dbReference>
<dbReference type="FunFam" id="1.10.8.640:FF:000001">
    <property type="entry name" value="Cytochrome c-type biogenesis protein"/>
    <property type="match status" value="1"/>
</dbReference>
<dbReference type="Gene3D" id="1.10.8.640">
    <property type="entry name" value="Cytochrome C biogenesis protein"/>
    <property type="match status" value="1"/>
</dbReference>
<dbReference type="InterPro" id="IPR051263">
    <property type="entry name" value="C-type_cytochrome_biogenesis"/>
</dbReference>
<dbReference type="InterPro" id="IPR005616">
    <property type="entry name" value="CcmH/CycL/Ccl2/NrfF_N"/>
</dbReference>
<dbReference type="InterPro" id="IPR038297">
    <property type="entry name" value="CcmH/CycL/NrfF/Ccl2_sf"/>
</dbReference>
<dbReference type="InterPro" id="IPR017565">
    <property type="entry name" value="For-dep_Cytc_NO2Rdtase_NrfF"/>
</dbReference>
<dbReference type="NCBIfam" id="TIGR03147">
    <property type="entry name" value="cyt_nit_nrfF"/>
    <property type="match status" value="1"/>
</dbReference>
<dbReference type="PANTHER" id="PTHR47870">
    <property type="entry name" value="CYTOCHROME C-TYPE BIOGENESIS PROTEIN CCMH"/>
    <property type="match status" value="1"/>
</dbReference>
<dbReference type="PANTHER" id="PTHR47870:SF2">
    <property type="entry name" value="FORMATE-DEPENDENT NITRITE REDUCTASE COMPLEX SUBUNIT NRFF"/>
    <property type="match status" value="1"/>
</dbReference>
<dbReference type="Pfam" id="PF03918">
    <property type="entry name" value="CcmH"/>
    <property type="match status" value="1"/>
</dbReference>